<sequence>MSQSTSVFRRNGFTFKQFFVAHDRCAMKVGTDGILLGAWAPVAGVKRCLDIGAGSGLLALMLAQRTDDSVMIDAVELESEAAAQAQENINQSPWAERINVHTADILQWITQQTVRFDLIISNPPYYQQGVECATPQREQARYTTTLDHPSLLTCAAECITEEGFFCVVLPEQIGNGFTELALSMGWHLRLRTDVAENEARLPHRVLLAFSPQAGECFSDRLVIRGPDQNYSEAYTALTQAFYLFM</sequence>
<feature type="chain" id="PRO_0000387372" description="tRNA1(Val) (adenine(37)-N6)-methyltransferase">
    <location>
        <begin position="1"/>
        <end position="245"/>
    </location>
</feature>
<protein>
    <recommendedName>
        <fullName evidence="1">tRNA1(Val) (adenine(37)-N6)-methyltransferase</fullName>
        <ecNumber evidence="1">2.1.1.223</ecNumber>
    </recommendedName>
    <alternativeName>
        <fullName evidence="1">tRNA m6A37 methyltransferase</fullName>
    </alternativeName>
</protein>
<comment type="function">
    <text evidence="1">Specifically methylates the adenine in position 37 of tRNA(1)(Val) (anticodon cmo5UAC).</text>
</comment>
<comment type="catalytic activity">
    <reaction evidence="1">
        <text>adenosine(37) in tRNA1(Val) + S-adenosyl-L-methionine = N(6)-methyladenosine(37) in tRNA1(Val) + S-adenosyl-L-homocysteine + H(+)</text>
        <dbReference type="Rhea" id="RHEA:43160"/>
        <dbReference type="Rhea" id="RHEA-COMP:10369"/>
        <dbReference type="Rhea" id="RHEA-COMP:10370"/>
        <dbReference type="ChEBI" id="CHEBI:15378"/>
        <dbReference type="ChEBI" id="CHEBI:57856"/>
        <dbReference type="ChEBI" id="CHEBI:59789"/>
        <dbReference type="ChEBI" id="CHEBI:74411"/>
        <dbReference type="ChEBI" id="CHEBI:74449"/>
        <dbReference type="EC" id="2.1.1.223"/>
    </reaction>
</comment>
<comment type="subcellular location">
    <subcellularLocation>
        <location evidence="1">Cytoplasm</location>
    </subcellularLocation>
</comment>
<comment type="similarity">
    <text evidence="1">Belongs to the methyltransferase superfamily. tRNA (adenine-N(6)-)-methyltransferase family.</text>
</comment>
<comment type="sequence caution" evidence="2">
    <conflict type="erroneous initiation">
        <sequence resource="EMBL-CDS" id="AAN81548"/>
    </conflict>
</comment>
<evidence type="ECO:0000255" key="1">
    <source>
        <dbReference type="HAMAP-Rule" id="MF_01872"/>
    </source>
</evidence>
<evidence type="ECO:0000305" key="2"/>
<accession>Q8FF14</accession>
<reference key="1">
    <citation type="journal article" date="2002" name="Proc. Natl. Acad. Sci. U.S.A.">
        <title>Extensive mosaic structure revealed by the complete genome sequence of uropathogenic Escherichia coli.</title>
        <authorList>
            <person name="Welch R.A."/>
            <person name="Burland V."/>
            <person name="Plunkett G. III"/>
            <person name="Redford P."/>
            <person name="Roesch P."/>
            <person name="Rasko D."/>
            <person name="Buckles E.L."/>
            <person name="Liou S.-R."/>
            <person name="Boutin A."/>
            <person name="Hackett J."/>
            <person name="Stroud D."/>
            <person name="Mayhew G.F."/>
            <person name="Rose D.J."/>
            <person name="Zhou S."/>
            <person name="Schwartz D.C."/>
            <person name="Perna N.T."/>
            <person name="Mobley H.L.T."/>
            <person name="Donnenberg M.S."/>
            <person name="Blattner F.R."/>
        </authorList>
    </citation>
    <scope>NUCLEOTIDE SEQUENCE [LARGE SCALE GENOMIC DNA]</scope>
    <source>
        <strain>CFT073 / ATCC 700928 / UPEC</strain>
    </source>
</reference>
<dbReference type="EC" id="2.1.1.223" evidence="1"/>
<dbReference type="EMBL" id="AE014075">
    <property type="protein sequence ID" value="AAN81548.1"/>
    <property type="status" value="ALT_INIT"/>
    <property type="molecule type" value="Genomic_DNA"/>
</dbReference>
<dbReference type="SMR" id="Q8FF14"/>
<dbReference type="STRING" id="199310.c3099"/>
<dbReference type="KEGG" id="ecc:c3099"/>
<dbReference type="eggNOG" id="COG4123">
    <property type="taxonomic scope" value="Bacteria"/>
</dbReference>
<dbReference type="HOGENOM" id="CLU_061983_0_0_6"/>
<dbReference type="Proteomes" id="UP000001410">
    <property type="component" value="Chromosome"/>
</dbReference>
<dbReference type="GO" id="GO:0005737">
    <property type="term" value="C:cytoplasm"/>
    <property type="evidence" value="ECO:0007669"/>
    <property type="project" value="UniProtKB-SubCell"/>
</dbReference>
<dbReference type="GO" id="GO:0003676">
    <property type="term" value="F:nucleic acid binding"/>
    <property type="evidence" value="ECO:0007669"/>
    <property type="project" value="InterPro"/>
</dbReference>
<dbReference type="GO" id="GO:0016430">
    <property type="term" value="F:tRNA (adenine-N6)-methyltransferase activity"/>
    <property type="evidence" value="ECO:0007669"/>
    <property type="project" value="UniProtKB-UniRule"/>
</dbReference>
<dbReference type="GO" id="GO:0032259">
    <property type="term" value="P:methylation"/>
    <property type="evidence" value="ECO:0007669"/>
    <property type="project" value="UniProtKB-KW"/>
</dbReference>
<dbReference type="GO" id="GO:0008033">
    <property type="term" value="P:tRNA processing"/>
    <property type="evidence" value="ECO:0007669"/>
    <property type="project" value="UniProtKB-UniRule"/>
</dbReference>
<dbReference type="CDD" id="cd02440">
    <property type="entry name" value="AdoMet_MTases"/>
    <property type="match status" value="1"/>
</dbReference>
<dbReference type="FunFam" id="3.40.50.150:FF:000087">
    <property type="entry name" value="tRNA1(Val) (adenine(37)-N6)-methyltransferase"/>
    <property type="match status" value="1"/>
</dbReference>
<dbReference type="Gene3D" id="3.40.50.150">
    <property type="entry name" value="Vaccinia Virus protein VP39"/>
    <property type="match status" value="1"/>
</dbReference>
<dbReference type="HAMAP" id="MF_01872">
    <property type="entry name" value="tRNA_methyltr_YfiC"/>
    <property type="match status" value="1"/>
</dbReference>
<dbReference type="InterPro" id="IPR002052">
    <property type="entry name" value="DNA_methylase_N6_adenine_CS"/>
</dbReference>
<dbReference type="InterPro" id="IPR029063">
    <property type="entry name" value="SAM-dependent_MTases_sf"/>
</dbReference>
<dbReference type="InterPro" id="IPR007848">
    <property type="entry name" value="Small_mtfrase_dom"/>
</dbReference>
<dbReference type="InterPro" id="IPR050210">
    <property type="entry name" value="tRNA_Adenine-N(6)_MTase"/>
</dbReference>
<dbReference type="InterPro" id="IPR022882">
    <property type="entry name" value="tRNA_adenine-N6_MeTrfase"/>
</dbReference>
<dbReference type="NCBIfam" id="NF047853">
    <property type="entry name" value="tRm6a37MtseTrmN"/>
    <property type="match status" value="1"/>
</dbReference>
<dbReference type="PANTHER" id="PTHR47739">
    <property type="entry name" value="TRNA1(VAL) (ADENINE(37)-N6)-METHYLTRANSFERASE"/>
    <property type="match status" value="1"/>
</dbReference>
<dbReference type="PANTHER" id="PTHR47739:SF1">
    <property type="entry name" value="TRNA1(VAL) (ADENINE(37)-N6)-METHYLTRANSFERASE"/>
    <property type="match status" value="1"/>
</dbReference>
<dbReference type="Pfam" id="PF05175">
    <property type="entry name" value="MTS"/>
    <property type="match status" value="1"/>
</dbReference>
<dbReference type="SUPFAM" id="SSF53335">
    <property type="entry name" value="S-adenosyl-L-methionine-dependent methyltransferases"/>
    <property type="match status" value="1"/>
</dbReference>
<dbReference type="PROSITE" id="PS00092">
    <property type="entry name" value="N6_MTASE"/>
    <property type="match status" value="1"/>
</dbReference>
<name>TRMN6_ECOL6</name>
<organism>
    <name type="scientific">Escherichia coli O6:H1 (strain CFT073 / ATCC 700928 / UPEC)</name>
    <dbReference type="NCBI Taxonomy" id="199310"/>
    <lineage>
        <taxon>Bacteria</taxon>
        <taxon>Pseudomonadati</taxon>
        <taxon>Pseudomonadota</taxon>
        <taxon>Gammaproteobacteria</taxon>
        <taxon>Enterobacterales</taxon>
        <taxon>Enterobacteriaceae</taxon>
        <taxon>Escherichia</taxon>
    </lineage>
</organism>
<proteinExistence type="inferred from homology"/>
<gene>
    <name evidence="1" type="primary">yfiC</name>
    <name type="ordered locus">c3099</name>
</gene>
<keyword id="KW-0963">Cytoplasm</keyword>
<keyword id="KW-0489">Methyltransferase</keyword>
<keyword id="KW-1185">Reference proteome</keyword>
<keyword id="KW-0949">S-adenosyl-L-methionine</keyword>
<keyword id="KW-0808">Transferase</keyword>
<keyword id="KW-0819">tRNA processing</keyword>